<protein>
    <recommendedName>
        <fullName evidence="1">Betaine aldehyde dehydrogenase</fullName>
        <shortName evidence="1">BADH</shortName>
        <ecNumber evidence="1">1.2.1.8</ecNumber>
    </recommendedName>
</protein>
<evidence type="ECO:0000255" key="1">
    <source>
        <dbReference type="HAMAP-Rule" id="MF_00804"/>
    </source>
</evidence>
<comment type="function">
    <text evidence="1">Involved in the biosynthesis of the osmoprotectant glycine betaine. Catalyzes the irreversible oxidation of betaine aldehyde to the corresponding acid.</text>
</comment>
<comment type="catalytic activity">
    <reaction evidence="1">
        <text>betaine aldehyde + NAD(+) + H2O = glycine betaine + NADH + 2 H(+)</text>
        <dbReference type="Rhea" id="RHEA:15305"/>
        <dbReference type="ChEBI" id="CHEBI:15377"/>
        <dbReference type="ChEBI" id="CHEBI:15378"/>
        <dbReference type="ChEBI" id="CHEBI:15710"/>
        <dbReference type="ChEBI" id="CHEBI:17750"/>
        <dbReference type="ChEBI" id="CHEBI:57540"/>
        <dbReference type="ChEBI" id="CHEBI:57945"/>
        <dbReference type="EC" id="1.2.1.8"/>
    </reaction>
    <physiologicalReaction direction="left-to-right" evidence="1">
        <dbReference type="Rhea" id="RHEA:15306"/>
    </physiologicalReaction>
</comment>
<comment type="cofactor">
    <cofactor evidence="1">
        <name>K(+)</name>
        <dbReference type="ChEBI" id="CHEBI:29103"/>
    </cofactor>
    <text evidence="1">Binds 2 potassium ions per subunit.</text>
</comment>
<comment type="pathway">
    <text evidence="1">Amine and polyamine biosynthesis; betaine biosynthesis via choline pathway; betaine from betaine aldehyde: step 1/1.</text>
</comment>
<comment type="subunit">
    <text evidence="1">Dimer of dimers.</text>
</comment>
<comment type="similarity">
    <text evidence="1">Belongs to the aldehyde dehydrogenase family.</text>
</comment>
<accession>B1XET7</accession>
<dbReference type="EC" id="1.2.1.8" evidence="1"/>
<dbReference type="EMBL" id="CP000948">
    <property type="protein sequence ID" value="ACB01477.1"/>
    <property type="molecule type" value="Genomic_DNA"/>
</dbReference>
<dbReference type="RefSeq" id="WP_000089110.1">
    <property type="nucleotide sequence ID" value="NC_010473.1"/>
</dbReference>
<dbReference type="SMR" id="B1XET7"/>
<dbReference type="KEGG" id="ecd:ECDH10B_0299"/>
<dbReference type="HOGENOM" id="CLU_005391_0_0_6"/>
<dbReference type="UniPathway" id="UPA00529">
    <property type="reaction ID" value="UER00386"/>
</dbReference>
<dbReference type="GO" id="GO:0008802">
    <property type="term" value="F:betaine-aldehyde dehydrogenase (NAD+) activity"/>
    <property type="evidence" value="ECO:0007669"/>
    <property type="project" value="UniProtKB-UniRule"/>
</dbReference>
<dbReference type="GO" id="GO:0046872">
    <property type="term" value="F:metal ion binding"/>
    <property type="evidence" value="ECO:0007669"/>
    <property type="project" value="UniProtKB-KW"/>
</dbReference>
<dbReference type="GO" id="GO:0019285">
    <property type="term" value="P:glycine betaine biosynthetic process from choline"/>
    <property type="evidence" value="ECO:0007669"/>
    <property type="project" value="UniProtKB-UniRule"/>
</dbReference>
<dbReference type="CDD" id="cd07090">
    <property type="entry name" value="ALDH_F9_TMBADH"/>
    <property type="match status" value="1"/>
</dbReference>
<dbReference type="FunFam" id="3.40.309.10:FF:000014">
    <property type="entry name" value="NAD/NADP-dependent betaine aldehyde dehydrogenase"/>
    <property type="match status" value="1"/>
</dbReference>
<dbReference type="FunFam" id="3.40.605.10:FF:000007">
    <property type="entry name" value="NAD/NADP-dependent betaine aldehyde dehydrogenase"/>
    <property type="match status" value="1"/>
</dbReference>
<dbReference type="Gene3D" id="3.40.605.10">
    <property type="entry name" value="Aldehyde Dehydrogenase, Chain A, domain 1"/>
    <property type="match status" value="1"/>
</dbReference>
<dbReference type="Gene3D" id="3.40.309.10">
    <property type="entry name" value="Aldehyde Dehydrogenase, Chain A, domain 2"/>
    <property type="match status" value="1"/>
</dbReference>
<dbReference type="HAMAP" id="MF_00804">
    <property type="entry name" value="BADH"/>
    <property type="match status" value="1"/>
</dbReference>
<dbReference type="InterPro" id="IPR016161">
    <property type="entry name" value="Ald_DH/histidinol_DH"/>
</dbReference>
<dbReference type="InterPro" id="IPR016163">
    <property type="entry name" value="Ald_DH_C"/>
</dbReference>
<dbReference type="InterPro" id="IPR016160">
    <property type="entry name" value="Ald_DH_CS_CYS"/>
</dbReference>
<dbReference type="InterPro" id="IPR029510">
    <property type="entry name" value="Ald_DH_CS_GLU"/>
</dbReference>
<dbReference type="InterPro" id="IPR016162">
    <property type="entry name" value="Ald_DH_N"/>
</dbReference>
<dbReference type="InterPro" id="IPR015590">
    <property type="entry name" value="Aldehyde_DH_dom"/>
</dbReference>
<dbReference type="InterPro" id="IPR011264">
    <property type="entry name" value="BADH"/>
</dbReference>
<dbReference type="NCBIfam" id="TIGR01804">
    <property type="entry name" value="BADH"/>
    <property type="match status" value="1"/>
</dbReference>
<dbReference type="NCBIfam" id="NF009725">
    <property type="entry name" value="PRK13252.1"/>
    <property type="match status" value="1"/>
</dbReference>
<dbReference type="PANTHER" id="PTHR11699">
    <property type="entry name" value="ALDEHYDE DEHYDROGENASE-RELATED"/>
    <property type="match status" value="1"/>
</dbReference>
<dbReference type="Pfam" id="PF00171">
    <property type="entry name" value="Aldedh"/>
    <property type="match status" value="1"/>
</dbReference>
<dbReference type="SUPFAM" id="SSF53720">
    <property type="entry name" value="ALDH-like"/>
    <property type="match status" value="1"/>
</dbReference>
<dbReference type="PROSITE" id="PS00070">
    <property type="entry name" value="ALDEHYDE_DEHYDR_CYS"/>
    <property type="match status" value="1"/>
</dbReference>
<dbReference type="PROSITE" id="PS00687">
    <property type="entry name" value="ALDEHYDE_DEHYDR_GLU"/>
    <property type="match status" value="1"/>
</dbReference>
<name>BETB_ECODH</name>
<feature type="chain" id="PRO_1000133950" description="Betaine aldehyde dehydrogenase">
    <location>
        <begin position="1"/>
        <end position="490"/>
    </location>
</feature>
<feature type="active site" description="Charge relay system" evidence="1">
    <location>
        <position position="162"/>
    </location>
</feature>
<feature type="active site" description="Proton acceptor" evidence="1">
    <location>
        <position position="252"/>
    </location>
</feature>
<feature type="active site" description="Nucleophile" evidence="1">
    <location>
        <position position="286"/>
    </location>
</feature>
<feature type="active site" description="Charge relay system" evidence="1">
    <location>
        <position position="464"/>
    </location>
</feature>
<feature type="binding site" evidence="1">
    <location>
        <position position="26"/>
    </location>
    <ligand>
        <name>K(+)</name>
        <dbReference type="ChEBI" id="CHEBI:29103"/>
        <label>1</label>
    </ligand>
</feature>
<feature type="binding site" evidence="1">
    <location>
        <position position="27"/>
    </location>
    <ligand>
        <name>K(+)</name>
        <dbReference type="ChEBI" id="CHEBI:29103"/>
        <label>1</label>
    </ligand>
</feature>
<feature type="binding site" evidence="1">
    <location>
        <position position="93"/>
    </location>
    <ligand>
        <name>K(+)</name>
        <dbReference type="ChEBI" id="CHEBI:29103"/>
        <label>1</label>
    </ligand>
</feature>
<feature type="binding site" evidence="1">
    <location>
        <begin position="150"/>
        <end position="152"/>
    </location>
    <ligand>
        <name>NAD(+)</name>
        <dbReference type="ChEBI" id="CHEBI:57540"/>
    </ligand>
</feature>
<feature type="binding site" evidence="1">
    <location>
        <begin position="176"/>
        <end position="179"/>
    </location>
    <ligand>
        <name>NAD(+)</name>
        <dbReference type="ChEBI" id="CHEBI:57540"/>
    </ligand>
</feature>
<feature type="binding site" evidence="1">
    <location>
        <position position="180"/>
    </location>
    <ligand>
        <name>K(+)</name>
        <dbReference type="ChEBI" id="CHEBI:29103"/>
        <label>1</label>
    </ligand>
</feature>
<feature type="binding site" evidence="1">
    <location>
        <begin position="230"/>
        <end position="233"/>
    </location>
    <ligand>
        <name>NAD(+)</name>
        <dbReference type="ChEBI" id="CHEBI:57540"/>
    </ligand>
</feature>
<feature type="binding site" evidence="1">
    <location>
        <position position="246"/>
    </location>
    <ligand>
        <name>K(+)</name>
        <dbReference type="ChEBI" id="CHEBI:29103"/>
        <label>2</label>
    </ligand>
</feature>
<feature type="binding site" evidence="1">
    <location>
        <position position="254"/>
    </location>
    <ligand>
        <name>NAD(+)</name>
        <dbReference type="ChEBI" id="CHEBI:57540"/>
    </ligand>
</feature>
<feature type="binding site" description="covalent" evidence="1">
    <location>
        <position position="286"/>
    </location>
    <ligand>
        <name>NAD(+)</name>
        <dbReference type="ChEBI" id="CHEBI:57540"/>
    </ligand>
</feature>
<feature type="binding site" evidence="1">
    <location>
        <position position="387"/>
    </location>
    <ligand>
        <name>NAD(+)</name>
        <dbReference type="ChEBI" id="CHEBI:57540"/>
    </ligand>
</feature>
<feature type="binding site" evidence="1">
    <location>
        <position position="457"/>
    </location>
    <ligand>
        <name>K(+)</name>
        <dbReference type="ChEBI" id="CHEBI:29103"/>
        <label>2</label>
    </ligand>
</feature>
<feature type="binding site" evidence="1">
    <location>
        <position position="460"/>
    </location>
    <ligand>
        <name>K(+)</name>
        <dbReference type="ChEBI" id="CHEBI:29103"/>
        <label>2</label>
    </ligand>
</feature>
<feature type="site" description="Seems to be a necessary countercharge to the potassium cations" evidence="1">
    <location>
        <position position="248"/>
    </location>
</feature>
<feature type="modified residue" description="Cysteine sulfenic acid (-SOH)" evidence="1">
    <location>
        <position position="286"/>
    </location>
</feature>
<gene>
    <name evidence="1" type="primary">betB</name>
    <name type="ordered locus">ECDH10B_0299</name>
</gene>
<organism>
    <name type="scientific">Escherichia coli (strain K12 / DH10B)</name>
    <dbReference type="NCBI Taxonomy" id="316385"/>
    <lineage>
        <taxon>Bacteria</taxon>
        <taxon>Pseudomonadati</taxon>
        <taxon>Pseudomonadota</taxon>
        <taxon>Gammaproteobacteria</taxon>
        <taxon>Enterobacterales</taxon>
        <taxon>Enterobacteriaceae</taxon>
        <taxon>Escherichia</taxon>
    </lineage>
</organism>
<reference key="1">
    <citation type="journal article" date="2008" name="J. Bacteriol.">
        <title>The complete genome sequence of Escherichia coli DH10B: insights into the biology of a laboratory workhorse.</title>
        <authorList>
            <person name="Durfee T."/>
            <person name="Nelson R."/>
            <person name="Baldwin S."/>
            <person name="Plunkett G. III"/>
            <person name="Burland V."/>
            <person name="Mau B."/>
            <person name="Petrosino J.F."/>
            <person name="Qin X."/>
            <person name="Muzny D.M."/>
            <person name="Ayele M."/>
            <person name="Gibbs R.A."/>
            <person name="Csorgo B."/>
            <person name="Posfai G."/>
            <person name="Weinstock G.M."/>
            <person name="Blattner F.R."/>
        </authorList>
    </citation>
    <scope>NUCLEOTIDE SEQUENCE [LARGE SCALE GENOMIC DNA]</scope>
    <source>
        <strain>K12 / DH10B</strain>
    </source>
</reference>
<keyword id="KW-0479">Metal-binding</keyword>
<keyword id="KW-0520">NAD</keyword>
<keyword id="KW-0521">NADP</keyword>
<keyword id="KW-0558">Oxidation</keyword>
<keyword id="KW-0560">Oxidoreductase</keyword>
<keyword id="KW-0630">Potassium</keyword>
<sequence length="490" mass="52911">MSRMAEQQLYIHGGYTSATSGRTFETINPANGNVLATVQAAGREDVDRAVKSAQQGQKIWASMTAMERSRILRRAVDILRERNDELAKLETLDTGKAYSETSTVDIVTGADVLEYYAGLIPALEGSQIPLRETSFVYTRREPLGVVAGIGAWNYPIQIALWKSAPALAAGNAMIFKPSEVTPLTALKLAEIYSEAGLPDGVFNVLPGVGAETGQYLTEHPGIAKVSFTGGVASGKKVMANSAASSLKEVTMELGGKSPLIVFDDADLDLAADIAMMANFFSSGQVCTNGTRVFVPAKCKAAFEQKILARVERIRAGDVFDPQTNFGPLVSFPHRDNVLRYIAKGKEEGARVLCGGDVLKGDGFDNGAWVAPTVFTDCSDDMTIVREEIFGPVMSILTYESEDEVIRRANDTDYGLAAGIVTADLNRAHRVIHQLEAGICWINTWGESPAEMPVGGYKHSGIGRENGVMTLQSYTQVKSIQVEMAKFQSIF</sequence>
<proteinExistence type="inferred from homology"/>